<evidence type="ECO:0000255" key="1">
    <source>
        <dbReference type="PROSITE-ProRule" id="PRU00448"/>
    </source>
</evidence>
<evidence type="ECO:0000255" key="2">
    <source>
        <dbReference type="PROSITE-ProRule" id="PRU00792"/>
    </source>
</evidence>
<evidence type="ECO:0000256" key="3">
    <source>
        <dbReference type="SAM" id="MobiDB-lite"/>
    </source>
</evidence>
<evidence type="ECO:0000305" key="4"/>
<evidence type="ECO:0000312" key="5">
    <source>
        <dbReference type="MGI" id="MGI:108559"/>
    </source>
</evidence>
<proteinExistence type="evidence at transcript level"/>
<reference key="1">
    <citation type="journal article" date="2009" name="PLoS Biol.">
        <title>Lineage-specific biology revealed by a finished genome assembly of the mouse.</title>
        <authorList>
            <person name="Church D.M."/>
            <person name="Goodstadt L."/>
            <person name="Hillier L.W."/>
            <person name="Zody M.C."/>
            <person name="Goldstein S."/>
            <person name="She X."/>
            <person name="Bult C.J."/>
            <person name="Agarwala R."/>
            <person name="Cherry J.L."/>
            <person name="DiCuccio M."/>
            <person name="Hlavina W."/>
            <person name="Kapustin Y."/>
            <person name="Meric P."/>
            <person name="Maglott D."/>
            <person name="Birtle Z."/>
            <person name="Marques A.C."/>
            <person name="Graves T."/>
            <person name="Zhou S."/>
            <person name="Teague B."/>
            <person name="Potamousis K."/>
            <person name="Churas C."/>
            <person name="Place M."/>
            <person name="Herschleb J."/>
            <person name="Runnheim R."/>
            <person name="Forrest D."/>
            <person name="Amos-Landgraf J."/>
            <person name="Schwartz D.C."/>
            <person name="Cheng Z."/>
            <person name="Lindblad-Toh K."/>
            <person name="Eichler E.E."/>
            <person name="Ponting C.P."/>
        </authorList>
    </citation>
    <scope>NUCLEOTIDE SEQUENCE [LARGE SCALE GENOMIC DNA]</scope>
    <source>
        <strain>C57BL/6J</strain>
    </source>
</reference>
<reference key="2">
    <citation type="journal article" date="2004" name="DNA Res.">
        <title>Prediction of the coding sequences of mouse homologues of KIAA gene: IV. The complete nucleotide sequences of 500 mouse KIAA-homologous cDNAs identified by screening of terminal sequences of cDNA clones randomly sampled from size-fractionated libraries.</title>
        <authorList>
            <person name="Okazaki N."/>
            <person name="Kikuno R."/>
            <person name="Ohara R."/>
            <person name="Inamoto S."/>
            <person name="Koseki H."/>
            <person name="Hiraoka S."/>
            <person name="Saga Y."/>
            <person name="Seino S."/>
            <person name="Nishimura M."/>
            <person name="Kaisho T."/>
            <person name="Hoshino K."/>
            <person name="Kitamura H."/>
            <person name="Nagase T."/>
            <person name="Ohara O."/>
            <person name="Koga H."/>
        </authorList>
    </citation>
    <scope>NUCLEOTIDE SEQUENCE [LARGE SCALE MRNA] OF 177-3305 (ISOFORM 7)</scope>
    <source>
        <tissue>Embryonic tail</tissue>
    </source>
</reference>
<sequence length="3305" mass="369258">MGKPLSRPDCLRRNPTCLGKGEDEDGYIEDCYVPQRSIYDTMRINEQIDQGSKLNQTSKSTMEKMEGSTISSNGTLGASSNVFEARGPEGKKLDERIIFDALKLSSDVQKSAPVPPRRRPNAERKDNVNRRSWKSFMPPNFPEFAERMEASLSEVSEAGASNPSLQEKKESSSALTESSGHFDHREPQSESVTLEHMSKSVDIPEVQNVKNLRDCQDFKFQQHSESSPHEFQPLGSEAAAASGNTDEMQEHRFSSATWPRAMKSSSKGGFSEKQYPLGDTACAVELPPLSPCLSEELLDPELHMLITPSLREKTESELKFEEDERWIMMEAEEEWEEEKLSEERKSLVTNEETSLADPLEESDQANSVPAVEDGSDRVAVSGTSDHLALHQMCCSVDLQPTRDQLASVPRGSPPDCTCVPAGDTVISEVKNRPDQGLEGLTSGLQCPVEAEQLSDTDSVQMFLELEKECLCEEGVTSSAELLSQASSEGLAPTQDAEDSLLISHFPGAALEQEQHVGFLSVRIKDPDTGLDGEYCNALDSSQVPKAVELCAQPDSGRDASTISKECEKVPFSPKIGGEFKLLADLEPHSELDTGGLLNSNLRASCEENLPVFIASELAKENGNLSQVDCSQTEGNVEEYMERIPLSFAFNYEQDVTSGPEVEVFSSDSNLLTDEIHLESGKGALISQEDSNLASLGNVDLCELSMEKVCDKDGETKEPGCQGKLLGNGAPAQFPTDFQRRSSESEVLSLHLLAGELRLNKAGAETMSDREPQLSMALSQEGELEMRDLDSTLNIFPEEQISKASNTVPGLEEWISSQQRPVPAAVVPMVENALDAVTPMPGEDIPAVALTASEGPAANASASDGTAAATPIVPIPEEDIPGASVVILVEDVMTAAISAPEQAAASSGAVPPVETVTVPIIDEDVTSEEPDTQAAEMFLPEEPAIPTPAGPTAEEPDTPTVPVSTAEEPSMPPPAGPTPEESAAPTLKEPTPEKPDTQVVSSSIPEWSATPATAVPAKEIFSPDGPFLEGTTHTDSVPISEETPVLENASSPGMGIKECLDSSAFGIKEVPGTMIHGKVPLAATDGLNSHELFQKDQVDPLQVKLQQVNGLGQGLIQSAGKNCDVQGLEHDMDEINTRWNTLNKKVAQRIAQLQEALLHCGKFQDALEPLLSWLTDTEELIANQKPPSAEYKVVKAQIQEQKLLQRLLDDRKATVDMLQAEGGRIAQSAELADREKITGQLESLERRWTDLLSKAAARQKQLEDILVLAKQFHETAEPISDFLSVTEKKLANSEPVGTQTAKIHQQIIRHKALEEEIENHATDVHQAVKIGQSLSSLTCPAEQGIMSEKLDSLQARYSEIQDRCCRKASLLEQALFNARLFGEDEVEVLNWLAEVEDKLSTVFVKDYRQDVLQKQHADHLALNEEIINRKKNVDQAIKNGQALLKQTTGEEVLLIQEKLDGIKTRYADITLTSSKALRTLEQARQLATKFHSTYEELTGWLREAEEELAASGGQSPTGEQIPQFQQRQKELKKEVMEHRLVLDTVNEVSHALLELVPWRAREGLDKLVSDANEQYKLISDTVGQRVDEIDAAIQRSQQYEQAADAELAWVAETKRKLMALGPIRLEQDQTTAQLQVQKAFSIDIIRHKDSMDELFSHRGEIFSTCGEEQKAVLQEKTECLIQQYEAVSLLNSERYARLERAQVLVNQFWETYEELSPWAEETLALIAQLPPPAVDHEQLRQQQEEMRQLRESIAEHKPHIDKILKIGPQLKELNPEEGKMVEEKYQKAENMYAQIKDEVRQRALALDEAVSQSAQFHDKIEPMLETLENLSSRLRMPPLIPAEVDKIRECISDNKSATVELEKLQPSFEALKRRGEELIGRSQGADKDLAAKEIQDKLDQMVFFWEDIKARSEEREIKFLDVLELAEKFWYDMAALLTTIKDTQDIVHDLESPGIDPSIIKQQVEAAETIKEETDGLHEELEFIRILGADLIFACGETEKPEVKKSIDEMNNAWENLNKTWKERLEKLEDAMQAAVQYQDTLQAMFDWLDNTVIKLCTMPPVGTDLNTVKDQLNEMKEFKVEVYQQQIEMEKLNHQGELMLKKATDETDRDIIREPLTELKHLWENLGEKIAHRQHKLEGALLALGQFQHALEELMSWLTHTEELLDAQRPISGDPKVIEVELAKHHVLKNDVLAHQATVATVNKAGSELLESSAGDDASSLRSRLETMNQCWESVLQKTEEREQQLQSTLQQAQGFHSEIEDFLLELNRMENQLSASKPTGGLPETAREQLDTHMELHSQLRAKEEIYNQLLDKGRLMLLSRGDSGSGSKTEQSVALLEQKWHAVSSKVEERKLEEALSLATEFQNSLQEFINWLTLAEQSLNIASPPSLILNTVLSQIEEHKVFANEVNDHRDQIIELDQTGNQLKFLSQKQDVVLIKNLLVSVQSRWEKVVQRSIERGRSLDDARKRAKQFHEAWKKLIDWLEDAESHLDSELEISNDPDKIKLQLSKHKEFQKTLGGKQPVYDTTIRTGRALKEKTLLAGDTQKLDNLLGEVRDKWDTVCGKSVERQHKLEEALLFSGQFMDALQALVDWLYKVEPQLAEDQPVHGDLDLVMNLMDAHKVFQKELGKRTGTVQVLKRSGRELIEGSRDDTTWVKGQLQELSTRWDTVCKLSVSKQSRLEQALKQAEEFRDTVHMLLEWLSEAEQTLRFRGALPDDTEALQSLIDTHKEFMKKVEEKRVDVNTAVAMGEAILAVCHPDCITTIKHWITIIRARFEEVLTWAKQHQQRLETALSELVANAELLEELLAWIQWAETTLIQRDQEPIPQNIDRVKALITEHQSFMEEMTRKQPDVDRVTKTYKRKSVEPTHAPFMEKSRSGSRKSLNQPTPPPMPILSQSEAKNPRINQLSARWQQVWLLALERQRKLNDALDRLEELKEFANFDFDVWRKKYMRWMNHKKSRVMDFFRRIDKDQDGKITRQEFIDGILASKFPTTKLEMTAVADIFDRDGDGYIDYYEFVAALHPNKDAYRPTTDADKIEDEVTRQVAQCKCAKRFQVEQIGENKYRFGDSQQLRLVRILRSTVMVRVGGGWMALDEFLVKNDPCRARGRTNIELREKFILPEGASQGMTPFRSRGRRSKPSSRAASPTRSSSSASQSNHSCTSMPSSPATPASGTKVISSSGSKLKRPTPAFHSSRTSLAGDTSNSSSPASTGAKANRADPKKSASRPGSRAGSRAGSRASSRRGSDASDFDLLETQSACSDTSESSAAGGQGSSRRGLTKPSKIPTMSKKTTTASPRTPGPKR</sequence>
<name>K0754_MOUSE</name>
<accession>Q69ZZ9</accession>
<organism>
    <name type="scientific">Mus musculus</name>
    <name type="common">Mouse</name>
    <dbReference type="NCBI Taxonomy" id="10090"/>
    <lineage>
        <taxon>Eukaryota</taxon>
        <taxon>Metazoa</taxon>
        <taxon>Chordata</taxon>
        <taxon>Craniata</taxon>
        <taxon>Vertebrata</taxon>
        <taxon>Euteleostomi</taxon>
        <taxon>Mammalia</taxon>
        <taxon>Eutheria</taxon>
        <taxon>Euarchontoglires</taxon>
        <taxon>Glires</taxon>
        <taxon>Rodentia</taxon>
        <taxon>Myomorpha</taxon>
        <taxon>Muroidea</taxon>
        <taxon>Muridae</taxon>
        <taxon>Murinae</taxon>
        <taxon>Mus</taxon>
        <taxon>Mus</taxon>
    </lineage>
</organism>
<protein>
    <recommendedName>
        <fullName evidence="4">Microtubule-actin cross-linking factor 1, isoforms 6/7</fullName>
    </recommendedName>
    <alternativeName>
        <fullName>Uncharacterized protein KIAA0754</fullName>
    </alternativeName>
</protein>
<feature type="chain" id="PRO_0000295723" description="Microtubule-actin cross-linking factor 1, isoforms 6/7">
    <location>
        <begin position="1"/>
        <end position="3305"/>
    </location>
</feature>
<feature type="domain" description="EF-hand 1" evidence="1">
    <location>
        <begin position="2958"/>
        <end position="2993"/>
    </location>
</feature>
<feature type="domain" description="EF-hand 2" evidence="1">
    <location>
        <begin position="2994"/>
        <end position="3029"/>
    </location>
</feature>
<feature type="domain" description="GAR" evidence="2">
    <location>
        <begin position="3034"/>
        <end position="3106"/>
    </location>
</feature>
<feature type="region of interest" description="Disordered" evidence="3">
    <location>
        <begin position="1"/>
        <end position="24"/>
    </location>
</feature>
<feature type="region of interest" description="Disordered" evidence="3">
    <location>
        <begin position="108"/>
        <end position="140"/>
    </location>
</feature>
<feature type="region of interest" description="Disordered" evidence="3">
    <location>
        <begin position="152"/>
        <end position="202"/>
    </location>
</feature>
<feature type="region of interest" description="Disordered" evidence="3">
    <location>
        <begin position="239"/>
        <end position="272"/>
    </location>
</feature>
<feature type="region of interest" description="Disordered" evidence="3">
    <location>
        <begin position="333"/>
        <end position="381"/>
    </location>
</feature>
<feature type="region of interest" description="Disordered" evidence="3">
    <location>
        <begin position="941"/>
        <end position="1007"/>
    </location>
</feature>
<feature type="region of interest" description="Disordered" evidence="3">
    <location>
        <begin position="2865"/>
        <end position="2896"/>
    </location>
</feature>
<feature type="region of interest" description="Disordered" evidence="3">
    <location>
        <begin position="3122"/>
        <end position="3305"/>
    </location>
</feature>
<feature type="compositionally biased region" description="Basic and acidic residues" evidence="3">
    <location>
        <begin position="120"/>
        <end position="129"/>
    </location>
</feature>
<feature type="compositionally biased region" description="Low complexity" evidence="3">
    <location>
        <begin position="3142"/>
        <end position="3176"/>
    </location>
</feature>
<feature type="compositionally biased region" description="Polar residues" evidence="3">
    <location>
        <begin position="3193"/>
        <end position="3212"/>
    </location>
</feature>
<feature type="compositionally biased region" description="Low complexity" evidence="3">
    <location>
        <begin position="3227"/>
        <end position="3241"/>
    </location>
</feature>
<feature type="compositionally biased region" description="Polar residues" evidence="3">
    <location>
        <begin position="3256"/>
        <end position="3266"/>
    </location>
</feature>
<feature type="compositionally biased region" description="Low complexity" evidence="3">
    <location>
        <begin position="3267"/>
        <end position="3278"/>
    </location>
</feature>
<feature type="binding site" evidence="1">
    <location>
        <position position="2971"/>
    </location>
    <ligand>
        <name>Ca(2+)</name>
        <dbReference type="ChEBI" id="CHEBI:29108"/>
        <label>1</label>
    </ligand>
</feature>
<feature type="binding site" evidence="1">
    <location>
        <position position="2973"/>
    </location>
    <ligand>
        <name>Ca(2+)</name>
        <dbReference type="ChEBI" id="CHEBI:29108"/>
        <label>1</label>
    </ligand>
</feature>
<feature type="binding site" evidence="1">
    <location>
        <position position="2975"/>
    </location>
    <ligand>
        <name>Ca(2+)</name>
        <dbReference type="ChEBI" id="CHEBI:29108"/>
        <label>1</label>
    </ligand>
</feature>
<feature type="binding site" evidence="1">
    <location>
        <position position="2977"/>
    </location>
    <ligand>
        <name>Ca(2+)</name>
        <dbReference type="ChEBI" id="CHEBI:29108"/>
        <label>1</label>
    </ligand>
</feature>
<feature type="binding site" evidence="1">
    <location>
        <position position="2982"/>
    </location>
    <ligand>
        <name>Ca(2+)</name>
        <dbReference type="ChEBI" id="CHEBI:29108"/>
        <label>1</label>
    </ligand>
</feature>
<feature type="binding site" evidence="1">
    <location>
        <position position="3007"/>
    </location>
    <ligand>
        <name>Ca(2+)</name>
        <dbReference type="ChEBI" id="CHEBI:29108"/>
        <label>2</label>
    </ligand>
</feature>
<feature type="binding site" evidence="1">
    <location>
        <position position="3009"/>
    </location>
    <ligand>
        <name>Ca(2+)</name>
        <dbReference type="ChEBI" id="CHEBI:29108"/>
        <label>2</label>
    </ligand>
</feature>
<feature type="binding site" evidence="1">
    <location>
        <position position="3011"/>
    </location>
    <ligand>
        <name>Ca(2+)</name>
        <dbReference type="ChEBI" id="CHEBI:29108"/>
        <label>2</label>
    </ligand>
</feature>
<feature type="binding site" evidence="1">
    <location>
        <position position="3013"/>
    </location>
    <ligand>
        <name>Ca(2+)</name>
        <dbReference type="ChEBI" id="CHEBI:29108"/>
        <label>2</label>
    </ligand>
</feature>
<feature type="binding site" evidence="1">
    <location>
        <position position="3018"/>
    </location>
    <ligand>
        <name>Ca(2+)</name>
        <dbReference type="ChEBI" id="CHEBI:29108"/>
        <label>2</label>
    </ligand>
</feature>
<feature type="splice variant" id="VSP_061508" description="In isoform 7.">
    <original>LFQKDQVDPLQVKLQQVNGLGQGLI</original>
    <variation>VIVDHFIGRKGLEHKVRIASSLTWC</variation>
    <location>
        <begin position="1091"/>
        <end position="1115"/>
    </location>
</feature>
<feature type="splice variant" id="VSP_061509" description="In isoform 7.">
    <location>
        <begin position="1116"/>
        <end position="3305"/>
    </location>
</feature>
<gene>
    <name evidence="5" type="primary">Macf1</name>
    <name type="synonym">Kiaa0754</name>
</gene>
<comment type="subcellular location">
    <subcellularLocation>
        <location evidence="2">Cytoplasm</location>
        <location evidence="2">Cytoskeleton</location>
    </subcellularLocation>
</comment>
<comment type="alternative products">
    <event type="alternative splicing"/>
    <isoform>
        <id>Q69ZZ9-2</id>
        <name>6</name>
        <sequence type="displayed"/>
    </isoform>
    <isoform>
        <id>Q69ZZ9-1</id>
        <name>7</name>
        <sequence type="described" ref="VSP_061508 VSP_061509"/>
    </isoform>
    <isoform>
        <id>Q9QXZ0-1</id>
        <name>1</name>
        <name>Macf1b</name>
        <sequence type="external"/>
    </isoform>
    <isoform>
        <id>Q9QXZ0-2</id>
        <name>2</name>
        <name>Macf1a</name>
        <sequence type="external"/>
    </isoform>
    <isoform>
        <id>Q9QXZ0-3</id>
        <name>3</name>
        <sequence type="external"/>
    </isoform>
    <isoform>
        <id>Q9QXZ0-4</id>
        <name>4</name>
        <sequence type="external"/>
    </isoform>
</comment>
<dbReference type="EMBL" id="AL606918">
    <property type="status" value="NOT_ANNOTATED_CDS"/>
    <property type="molecule type" value="Genomic_DNA"/>
</dbReference>
<dbReference type="EMBL" id="AK173019">
    <property type="protein sequence ID" value="BAD32297.1"/>
    <property type="molecule type" value="mRNA"/>
</dbReference>
<dbReference type="RefSeq" id="NP_001161390.1">
    <property type="nucleotide sequence ID" value="NM_001167918.1"/>
</dbReference>
<dbReference type="RefSeq" id="NP_001388222.1">
    <molecule id="Q69ZZ9-2"/>
    <property type="nucleotide sequence ID" value="NM_001401293.2"/>
</dbReference>
<dbReference type="SMR" id="Q69ZZ9"/>
<dbReference type="iPTMnet" id="Q69ZZ9"/>
<dbReference type="PhosphoSitePlus" id="Q69ZZ9"/>
<dbReference type="jPOST" id="Q69ZZ9"/>
<dbReference type="PeptideAtlas" id="Q69ZZ9"/>
<dbReference type="ProteomicsDB" id="301707"/>
<dbReference type="Pumba" id="Q69ZZ9"/>
<dbReference type="GeneID" id="11426"/>
<dbReference type="UCSC" id="uc012dkt.1">
    <molecule id="Q69ZZ9-2"/>
    <property type="organism name" value="mouse"/>
</dbReference>
<dbReference type="AGR" id="MGI:108559"/>
<dbReference type="MGI" id="MGI:108559">
    <property type="gene designation" value="Macf1"/>
</dbReference>
<dbReference type="InParanoid" id="Q69ZZ9"/>
<dbReference type="Proteomes" id="UP000000589">
    <property type="component" value="Unplaced"/>
</dbReference>
<dbReference type="RNAct" id="Q69ZZ9">
    <property type="molecule type" value="protein"/>
</dbReference>
<dbReference type="GO" id="GO:0015629">
    <property type="term" value="C:actin cytoskeleton"/>
    <property type="evidence" value="ECO:0000314"/>
    <property type="project" value="MGI"/>
</dbReference>
<dbReference type="GO" id="GO:0005938">
    <property type="term" value="C:cell cortex"/>
    <property type="evidence" value="ECO:0000266"/>
    <property type="project" value="MGI"/>
</dbReference>
<dbReference type="GO" id="GO:0015630">
    <property type="term" value="C:microtubule cytoskeleton"/>
    <property type="evidence" value="ECO:0000314"/>
    <property type="project" value="MGI"/>
</dbReference>
<dbReference type="GO" id="GO:0014069">
    <property type="term" value="C:postsynaptic density"/>
    <property type="evidence" value="ECO:0000314"/>
    <property type="project" value="MGI"/>
</dbReference>
<dbReference type="GO" id="GO:0003779">
    <property type="term" value="F:actin binding"/>
    <property type="evidence" value="ECO:0000314"/>
    <property type="project" value="MGI"/>
</dbReference>
<dbReference type="GO" id="GO:0005509">
    <property type="term" value="F:calcium ion binding"/>
    <property type="evidence" value="ECO:0007669"/>
    <property type="project" value="InterPro"/>
</dbReference>
<dbReference type="GO" id="GO:0008017">
    <property type="term" value="F:microtubule binding"/>
    <property type="evidence" value="ECO:0000314"/>
    <property type="project" value="MGI"/>
</dbReference>
<dbReference type="GO" id="GO:0016477">
    <property type="term" value="P:cell migration"/>
    <property type="evidence" value="ECO:0000315"/>
    <property type="project" value="MGI"/>
</dbReference>
<dbReference type="GO" id="GO:0007163">
    <property type="term" value="P:establishment or maintenance of cell polarity"/>
    <property type="evidence" value="ECO:0000315"/>
    <property type="project" value="MGI"/>
</dbReference>
<dbReference type="GO" id="GO:0045104">
    <property type="term" value="P:intermediate filament cytoskeleton organization"/>
    <property type="evidence" value="ECO:0007669"/>
    <property type="project" value="InterPro"/>
</dbReference>
<dbReference type="GO" id="GO:0001707">
    <property type="term" value="P:mesoderm formation"/>
    <property type="evidence" value="ECO:0000315"/>
    <property type="project" value="MGI"/>
</dbReference>
<dbReference type="GO" id="GO:0006620">
    <property type="term" value="P:post-translational protein targeting to endoplasmic reticulum membrane"/>
    <property type="evidence" value="ECO:0000315"/>
    <property type="project" value="MGI"/>
</dbReference>
<dbReference type="GO" id="GO:0008104">
    <property type="term" value="P:protein localization"/>
    <property type="evidence" value="ECO:0000266"/>
    <property type="project" value="MGI"/>
</dbReference>
<dbReference type="GO" id="GO:0016055">
    <property type="term" value="P:Wnt signaling pathway"/>
    <property type="evidence" value="ECO:0000315"/>
    <property type="project" value="MGI"/>
</dbReference>
<dbReference type="CDD" id="cd00051">
    <property type="entry name" value="EFh"/>
    <property type="match status" value="1"/>
</dbReference>
<dbReference type="CDD" id="cd00176">
    <property type="entry name" value="SPEC"/>
    <property type="match status" value="8"/>
</dbReference>
<dbReference type="FunFam" id="1.10.238.10:FF:000013">
    <property type="entry name" value="Microtubule-actin cross-linking factor 1"/>
    <property type="match status" value="1"/>
</dbReference>
<dbReference type="FunFam" id="1.20.58.60:FF:000001">
    <property type="entry name" value="Microtubule-actin cross-linking factor 1"/>
    <property type="match status" value="3"/>
</dbReference>
<dbReference type="FunFam" id="1.20.58.60:FF:000012">
    <property type="entry name" value="Microtubule-actin cross-linking factor 1"/>
    <property type="match status" value="1"/>
</dbReference>
<dbReference type="FunFam" id="1.20.58.60:FF:000016">
    <property type="entry name" value="Microtubule-actin cross-linking factor 1"/>
    <property type="match status" value="1"/>
</dbReference>
<dbReference type="FunFam" id="1.20.58.60:FF:000021">
    <property type="entry name" value="Microtubule-actin cross-linking factor 1"/>
    <property type="match status" value="1"/>
</dbReference>
<dbReference type="FunFam" id="1.20.58.60:FF:000022">
    <property type="entry name" value="Microtubule-actin cross-linking factor 1"/>
    <property type="match status" value="1"/>
</dbReference>
<dbReference type="FunFam" id="3.30.920.20:FF:000001">
    <property type="entry name" value="Microtubule-actin cross-linking factor 1"/>
    <property type="match status" value="1"/>
</dbReference>
<dbReference type="FunFam" id="1.20.58.60:FF:000008">
    <property type="entry name" value="microtubule-actin cross-linking factor 1"/>
    <property type="match status" value="2"/>
</dbReference>
<dbReference type="FunFam" id="1.20.58.60:FF:000014">
    <property type="entry name" value="microtubule-actin cross-linking factor 1"/>
    <property type="match status" value="1"/>
</dbReference>
<dbReference type="FunFam" id="1.20.58.60:FF:000025">
    <property type="entry name" value="microtubule-actin cross-linking factor 1"/>
    <property type="match status" value="1"/>
</dbReference>
<dbReference type="FunFam" id="1.20.58.60:FF:000084">
    <property type="entry name" value="microtubule-actin cross-linking factor 1 isoform X2"/>
    <property type="match status" value="1"/>
</dbReference>
<dbReference type="FunFam" id="1.20.58.60:FF:000088">
    <property type="entry name" value="microtubule-actin cross-linking factor 1 isoform X2"/>
    <property type="match status" value="1"/>
</dbReference>
<dbReference type="FunFam" id="1.20.58.60:FF:000092">
    <property type="entry name" value="microtubule-actin cross-linking factor 1 isoform X2"/>
    <property type="match status" value="1"/>
</dbReference>
<dbReference type="FunFam" id="1.20.58.60:FF:000048">
    <property type="entry name" value="microtubule-actin cross-linking factor 1 isoform X3"/>
    <property type="match status" value="1"/>
</dbReference>
<dbReference type="FunFam" id="1.20.58.60:FF:000061">
    <property type="entry name" value="microtubule-actin cross-linking factor 1 isoform X3"/>
    <property type="match status" value="1"/>
</dbReference>
<dbReference type="Gene3D" id="1.20.58.60">
    <property type="match status" value="17"/>
</dbReference>
<dbReference type="Gene3D" id="1.10.238.10">
    <property type="entry name" value="EF-hand"/>
    <property type="match status" value="1"/>
</dbReference>
<dbReference type="Gene3D" id="3.30.920.20">
    <property type="entry name" value="Gas2-like domain"/>
    <property type="match status" value="1"/>
</dbReference>
<dbReference type="InterPro" id="IPR011992">
    <property type="entry name" value="EF-hand-dom_pair"/>
</dbReference>
<dbReference type="InterPro" id="IPR018247">
    <property type="entry name" value="EF_Hand_1_Ca_BS"/>
</dbReference>
<dbReference type="InterPro" id="IPR002048">
    <property type="entry name" value="EF_hand_dom"/>
</dbReference>
<dbReference type="InterPro" id="IPR003108">
    <property type="entry name" value="GAR_dom"/>
</dbReference>
<dbReference type="InterPro" id="IPR036534">
    <property type="entry name" value="GAR_dom_sf"/>
</dbReference>
<dbReference type="InterPro" id="IPR043197">
    <property type="entry name" value="Plakin"/>
</dbReference>
<dbReference type="InterPro" id="IPR018159">
    <property type="entry name" value="Spectrin/alpha-actinin"/>
</dbReference>
<dbReference type="InterPro" id="IPR002017">
    <property type="entry name" value="Spectrin_repeat"/>
</dbReference>
<dbReference type="PANTHER" id="PTHR23169">
    <property type="entry name" value="ENVOPLAKIN"/>
    <property type="match status" value="1"/>
</dbReference>
<dbReference type="PANTHER" id="PTHR23169:SF25">
    <property type="entry name" value="MICROTUBULE-ACTIN CROSS-LINKING FACTOR 1, ISOFORMS 1_2_3_4_5"/>
    <property type="match status" value="1"/>
</dbReference>
<dbReference type="Pfam" id="PF13499">
    <property type="entry name" value="EF-hand_7"/>
    <property type="match status" value="1"/>
</dbReference>
<dbReference type="Pfam" id="PF02187">
    <property type="entry name" value="GAS2"/>
    <property type="match status" value="1"/>
</dbReference>
<dbReference type="Pfam" id="PF00435">
    <property type="entry name" value="Spectrin"/>
    <property type="match status" value="14"/>
</dbReference>
<dbReference type="SMART" id="SM00054">
    <property type="entry name" value="EFh"/>
    <property type="match status" value="2"/>
</dbReference>
<dbReference type="SMART" id="SM00243">
    <property type="entry name" value="GAS2"/>
    <property type="match status" value="1"/>
</dbReference>
<dbReference type="SMART" id="SM00150">
    <property type="entry name" value="SPEC"/>
    <property type="match status" value="17"/>
</dbReference>
<dbReference type="SUPFAM" id="SSF47473">
    <property type="entry name" value="EF-hand"/>
    <property type="match status" value="1"/>
</dbReference>
<dbReference type="SUPFAM" id="SSF143575">
    <property type="entry name" value="GAS2 domain-like"/>
    <property type="match status" value="1"/>
</dbReference>
<dbReference type="SUPFAM" id="SSF46966">
    <property type="entry name" value="Spectrin repeat"/>
    <property type="match status" value="15"/>
</dbReference>
<dbReference type="PROSITE" id="PS00018">
    <property type="entry name" value="EF_HAND_1"/>
    <property type="match status" value="2"/>
</dbReference>
<dbReference type="PROSITE" id="PS50222">
    <property type="entry name" value="EF_HAND_2"/>
    <property type="match status" value="2"/>
</dbReference>
<dbReference type="PROSITE" id="PS51460">
    <property type="entry name" value="GAR"/>
    <property type="match status" value="1"/>
</dbReference>
<keyword id="KW-0025">Alternative splicing</keyword>
<keyword id="KW-0106">Calcium</keyword>
<keyword id="KW-0963">Cytoplasm</keyword>
<keyword id="KW-0206">Cytoskeleton</keyword>
<keyword id="KW-0479">Metal-binding</keyword>
<keyword id="KW-1185">Reference proteome</keyword>